<accession>G7KGT0</accession>
<reference key="1">
    <citation type="journal article" date="2011" name="Nature">
        <title>The Medicago genome provides insight into the evolution of rhizobial symbioses.</title>
        <authorList>
            <person name="Young N.D."/>
            <person name="Debelle F."/>
            <person name="Oldroyd G.E.D."/>
            <person name="Geurts R."/>
            <person name="Cannon S.B."/>
            <person name="Udvardi M.K."/>
            <person name="Benedito V.A."/>
            <person name="Mayer K.F.X."/>
            <person name="Gouzy J."/>
            <person name="Schoof H."/>
            <person name="Van de Peer Y."/>
            <person name="Proost S."/>
            <person name="Cook D.R."/>
            <person name="Meyers B.C."/>
            <person name="Spannagl M."/>
            <person name="Cheung F."/>
            <person name="De Mita S."/>
            <person name="Krishnakumar V."/>
            <person name="Gundlach H."/>
            <person name="Zhou S."/>
            <person name="Mudge J."/>
            <person name="Bharti A.K."/>
            <person name="Murray J.D."/>
            <person name="Naoumkina M.A."/>
            <person name="Rosen B."/>
            <person name="Silverstein K.A.T."/>
            <person name="Tang H."/>
            <person name="Rombauts S."/>
            <person name="Zhao P.X."/>
            <person name="Zhou P."/>
            <person name="Barbe V."/>
            <person name="Bardou P."/>
            <person name="Bechner M."/>
            <person name="Bellec A."/>
            <person name="Berger A."/>
            <person name="Berges H."/>
            <person name="Bidwell S."/>
            <person name="Bisseling T."/>
            <person name="Choisne N."/>
            <person name="Couloux A."/>
            <person name="Denny R."/>
            <person name="Deshpande S."/>
            <person name="Dai X."/>
            <person name="Doyle J.J."/>
            <person name="Dudez A.-M."/>
            <person name="Farmer A.D."/>
            <person name="Fouteau S."/>
            <person name="Franken C."/>
            <person name="Gibelin C."/>
            <person name="Gish J."/>
            <person name="Goldstein S."/>
            <person name="Gonzalez A.J."/>
            <person name="Green P.J."/>
            <person name="Hallab A."/>
            <person name="Hartog M."/>
            <person name="Hua A."/>
            <person name="Humphray S.J."/>
            <person name="Jeong D.-H."/>
            <person name="Jing Y."/>
            <person name="Jocker A."/>
            <person name="Kenton S.M."/>
            <person name="Kim D.-J."/>
            <person name="Klee K."/>
            <person name="Lai H."/>
            <person name="Lang C."/>
            <person name="Lin S."/>
            <person name="Macmil S.L."/>
            <person name="Magdelenat G."/>
            <person name="Matthews L."/>
            <person name="McCorrison J."/>
            <person name="Monaghan E.L."/>
            <person name="Mun J.-H."/>
            <person name="Najar F.Z."/>
            <person name="Nicholson C."/>
            <person name="Noirot C."/>
            <person name="O'Bleness M."/>
            <person name="Paule C.R."/>
            <person name="Poulain J."/>
            <person name="Prion F."/>
            <person name="Qin B."/>
            <person name="Qu C."/>
            <person name="Retzel E.F."/>
            <person name="Riddle C."/>
            <person name="Sallet E."/>
            <person name="Samain S."/>
            <person name="Samson N."/>
            <person name="Sanders I."/>
            <person name="Saurat O."/>
            <person name="Scarpelli C."/>
            <person name="Schiex T."/>
            <person name="Segurens B."/>
            <person name="Severin A.J."/>
            <person name="Sherrier D.J."/>
            <person name="Shi R."/>
            <person name="Sims S."/>
            <person name="Singer S.R."/>
            <person name="Sinharoy S."/>
            <person name="Sterck L."/>
            <person name="Viollet A."/>
            <person name="Wang B.-B."/>
            <person name="Wang K."/>
            <person name="Wang M."/>
            <person name="Wang X."/>
            <person name="Warfsmann J."/>
            <person name="Weissenbach J."/>
            <person name="White D.D."/>
            <person name="White J.D."/>
            <person name="Wiley G.B."/>
            <person name="Wincker P."/>
            <person name="Xing Y."/>
            <person name="Yang L."/>
            <person name="Yao Z."/>
            <person name="Ying F."/>
            <person name="Zhai J."/>
            <person name="Zhou L."/>
            <person name="Zuber A."/>
            <person name="Denarie J."/>
            <person name="Dixon R.A."/>
            <person name="May G.D."/>
            <person name="Schwartz D.C."/>
            <person name="Rogers J."/>
            <person name="Quetier F."/>
            <person name="Town C.D."/>
            <person name="Roe B.A."/>
        </authorList>
    </citation>
    <scope>NUCLEOTIDE SEQUENCE [LARGE SCALE GENOMIC DNA]</scope>
    <source>
        <strain>cv. Jemalong A17</strain>
    </source>
</reference>
<reference key="2">
    <citation type="journal article" date="2014" name="BMC Genomics">
        <title>An improved genome release (version Mt4.0) for the model legume Medicago truncatula.</title>
        <authorList>
            <person name="Tang H."/>
            <person name="Krishnakumar V."/>
            <person name="Bidwell S."/>
            <person name="Rosen B."/>
            <person name="Chan A."/>
            <person name="Zhou S."/>
            <person name="Gentzbittel L."/>
            <person name="Childs K.L."/>
            <person name="Yandell M."/>
            <person name="Gundlach H."/>
            <person name="Mayer K.F."/>
            <person name="Schwartz D.C."/>
            <person name="Town C.D."/>
        </authorList>
    </citation>
    <scope>GENOME REANNOTATION</scope>
    <source>
        <strain>cv. Jemalong A17</strain>
    </source>
</reference>
<reference key="3">
    <citation type="journal article" date="2018" name="Nat. Plants">
        <title>Whole-genome landscape of Medicago truncatula symbiotic genes.</title>
        <authorList>
            <person name="Pecrix Y."/>
            <person name="Staton S.E."/>
            <person name="Sallet E."/>
            <person name="Lelandais-Briere C."/>
            <person name="Moreau S."/>
            <person name="Carrere S."/>
            <person name="Blein T."/>
            <person name="Jardinaud M.F."/>
            <person name="Latrasse D."/>
            <person name="Zouine M."/>
            <person name="Zahm M."/>
            <person name="Kreplak J."/>
            <person name="Mayjonade B."/>
            <person name="Satge C."/>
            <person name="Perez M."/>
            <person name="Cauet S."/>
            <person name="Marande W."/>
            <person name="Chantry-Darmon C."/>
            <person name="Lopez-Roques C."/>
            <person name="Bouchez O."/>
            <person name="Berard A."/>
            <person name="Debelle F."/>
            <person name="Munos S."/>
            <person name="Bendahmane A."/>
            <person name="Berges H."/>
            <person name="Niebel A."/>
            <person name="Buitink J."/>
            <person name="Frugier F."/>
            <person name="Benhamed M."/>
            <person name="Crespi M."/>
            <person name="Gouzy J."/>
            <person name="Gamas P."/>
        </authorList>
    </citation>
    <scope>NUCLEOTIDE SEQUENCE [LARGE SCALE GENOMIC DNA]</scope>
    <source>
        <strain>cv. Jemalong A17</strain>
    </source>
</reference>
<reference key="4">
    <citation type="journal article" date="2007" name="Gene">
        <title>Plant hemoglobins: what we know six decades after their discovery.</title>
        <authorList>
            <person name="Garrocho-Villegas V."/>
            <person name="Gopalasubramaniam S.K."/>
            <person name="Arredondo-Peter R."/>
        </authorList>
    </citation>
    <scope>REVIEW ON PHYTOGLOBINS</scope>
</reference>
<reference key="5">
    <citation type="journal article" date="2013" name="J. Exp. Bot.">
        <title>Inhibition of nitrogen fixation in symbiotic Medicago truncatula upon Cd exposure is a local process involving leghaemoglobin.</title>
        <authorList>
            <person name="Marino D."/>
            <person name="Damiani I."/>
            <person name="Gucciardo S."/>
            <person name="Mijangos I."/>
            <person name="Pauly N."/>
            <person name="Puppo A."/>
        </authorList>
    </citation>
    <scope>REPRESSION BY CADMIUM</scope>
    <source>
        <strain>cv. Jemalong J6</strain>
    </source>
</reference>
<reference key="6">
    <citation type="journal article" date="2018" name="Front. Plant Sci.">
        <title>MtCAS31 aids symbiotic nitrogen fixation by protecting the leghemoglobin MtLb120-1 under drought stress in Medicago truncatula.</title>
        <authorList>
            <person name="Li X."/>
            <person name="Feng H."/>
            <person name="Wen J."/>
            <person name="Dong J."/>
            <person name="Wang T."/>
        </authorList>
    </citation>
    <scope>FUNCTION</scope>
    <scope>DISRUPTION PHENOTYPE</scope>
    <scope>INTERACTION WITH CAS31</scope>
    <scope>SUBCELLULAR LOCATION</scope>
    <scope>TISSUE SPECIFICITY</scope>
    <scope>DEVELOPMENTAL STAGE</scope>
    <source>
        <strain>cv. R108</strain>
    </source>
</reference>
<reference key="7">
    <citation type="journal article" date="2020" name="New Phytol.">
        <title>Medicago truncatula Phytoglobin 1.1 controls symbiotic nodulation and nitrogen fixation via the regulation of nitric oxide concentration.</title>
        <authorList>
            <person name="Berger A."/>
            <person name="Guinand S."/>
            <person name="Boscari A."/>
            <person name="Puppo A."/>
            <person name="Brouquisse R."/>
        </authorList>
    </citation>
    <scope>GENE FAMILY</scope>
    <scope>NOMENCLATURE</scope>
    <source>
        <strain>cv. Jemalong A17</strain>
    </source>
</reference>
<reference key="8">
    <citation type="journal article" date="2020" name="New Phytol.">
        <title>Hemoglobins in the legume-Rhizobium symbiosis.</title>
        <authorList>
            <person name="Larrainzar E."/>
            <person name="Villar I."/>
            <person name="Rubio M.C."/>
            <person name="Perez-Rontome C."/>
            <person name="Huertas R."/>
            <person name="Sato S."/>
            <person name="Mun J.-H."/>
            <person name="Becana M."/>
        </authorList>
    </citation>
    <scope>REVIEW ON PHYTOGLOBINS</scope>
    <scope>GENE FAMILY</scope>
    <scope>NOMENCLATURE</scope>
</reference>
<gene>
    <name evidence="12" type="primary">LB8</name>
    <name evidence="10" type="synonym">LB120-1</name>
    <name evidence="11" type="synonym">LB6</name>
    <name evidence="15" type="ordered locus">MTR_5g080440</name>
    <name evidence="14" type="ordered locus">Medtr5g080440</name>
    <name evidence="16" type="ORF">MtrunA17_Chr5g0435621</name>
</gene>
<name>LGB8_MEDTR</name>
<feature type="initiator methionine" description="Removed" evidence="1">
    <location>
        <position position="1"/>
    </location>
</feature>
<feature type="chain" id="PRO_0000460292" description="Leghemoglobin 8">
    <location>
        <begin position="2"/>
        <end position="147"/>
    </location>
</feature>
<feature type="domain" description="Globin" evidence="6">
    <location>
        <begin position="2"/>
        <end position="147"/>
    </location>
</feature>
<feature type="binding site" evidence="3">
    <location>
        <position position="45"/>
    </location>
    <ligand>
        <name>heme b</name>
        <dbReference type="ChEBI" id="CHEBI:60344"/>
    </ligand>
</feature>
<feature type="binding site" evidence="3">
    <location>
        <position position="62"/>
    </location>
    <ligand>
        <name>O2</name>
        <dbReference type="ChEBI" id="CHEBI:15379"/>
    </ligand>
</feature>
<feature type="binding site" evidence="3">
    <location>
        <position position="65"/>
    </location>
    <ligand>
        <name>heme b</name>
        <dbReference type="ChEBI" id="CHEBI:60344"/>
    </ligand>
</feature>
<feature type="binding site" description="proximal binding residue" evidence="6">
    <location>
        <position position="94"/>
    </location>
    <ligand>
        <name>heme b</name>
        <dbReference type="ChEBI" id="CHEBI:60344"/>
    </ligand>
    <ligandPart>
        <name>Fe</name>
        <dbReference type="ChEBI" id="CHEBI:18248"/>
    </ligandPart>
</feature>
<feature type="binding site" evidence="3">
    <location>
        <position position="97"/>
    </location>
    <ligand>
        <name>heme b</name>
        <dbReference type="ChEBI" id="CHEBI:60344"/>
    </ligand>
</feature>
<feature type="modified residue" description="Nitrated tyrosine" evidence="2">
    <location>
        <position position="25"/>
    </location>
</feature>
<feature type="modified residue" description="Nitrated tyrosine" evidence="2">
    <location>
        <position position="30"/>
    </location>
</feature>
<feature type="modified residue" description="Phosphoserine" evidence="4">
    <location>
        <position position="45"/>
    </location>
</feature>
<feature type="modified residue" description="Nitrated tyrosine" evidence="2">
    <location>
        <position position="135"/>
    </location>
</feature>
<organism>
    <name type="scientific">Medicago truncatula</name>
    <name type="common">Barrel medic</name>
    <name type="synonym">Medicago tribuloides</name>
    <dbReference type="NCBI Taxonomy" id="3880"/>
    <lineage>
        <taxon>Eukaryota</taxon>
        <taxon>Viridiplantae</taxon>
        <taxon>Streptophyta</taxon>
        <taxon>Embryophyta</taxon>
        <taxon>Tracheophyta</taxon>
        <taxon>Spermatophyta</taxon>
        <taxon>Magnoliopsida</taxon>
        <taxon>eudicotyledons</taxon>
        <taxon>Gunneridae</taxon>
        <taxon>Pentapetalae</taxon>
        <taxon>rosids</taxon>
        <taxon>fabids</taxon>
        <taxon>Fabales</taxon>
        <taxon>Fabaceae</taxon>
        <taxon>Papilionoideae</taxon>
        <taxon>50 kb inversion clade</taxon>
        <taxon>NPAAA clade</taxon>
        <taxon>Hologalegina</taxon>
        <taxon>IRL clade</taxon>
        <taxon>Trifolieae</taxon>
        <taxon>Medicago</taxon>
    </lineage>
</organism>
<evidence type="ECO:0000250" key="1">
    <source>
        <dbReference type="UniProtKB" id="P02233"/>
    </source>
</evidence>
<evidence type="ECO:0000250" key="2">
    <source>
        <dbReference type="UniProtKB" id="P02234"/>
    </source>
</evidence>
<evidence type="ECO:0000250" key="3">
    <source>
        <dbReference type="UniProtKB" id="P02240"/>
    </source>
</evidence>
<evidence type="ECO:0000250" key="4">
    <source>
        <dbReference type="UniProtKB" id="Q3C1F7"/>
    </source>
</evidence>
<evidence type="ECO:0000250" key="5">
    <source>
        <dbReference type="UniProtKB" id="Q43296"/>
    </source>
</evidence>
<evidence type="ECO:0000255" key="6">
    <source>
        <dbReference type="PROSITE-ProRule" id="PRU00238"/>
    </source>
</evidence>
<evidence type="ECO:0000269" key="7">
    <source>
    </source>
</evidence>
<evidence type="ECO:0000269" key="8">
    <source>
    </source>
</evidence>
<evidence type="ECO:0000303" key="9">
    <source>
    </source>
</evidence>
<evidence type="ECO:0000303" key="10">
    <source>
    </source>
</evidence>
<evidence type="ECO:0000303" key="11">
    <source>
    </source>
</evidence>
<evidence type="ECO:0000303" key="12">
    <source>
    </source>
</evidence>
<evidence type="ECO:0000305" key="13"/>
<evidence type="ECO:0000305" key="14">
    <source>
    </source>
</evidence>
<evidence type="ECO:0000312" key="15">
    <source>
        <dbReference type="EMBL" id="AES99407.1"/>
    </source>
</evidence>
<evidence type="ECO:0000312" key="16">
    <source>
        <dbReference type="EMBL" id="RHN57001.1"/>
    </source>
</evidence>
<proteinExistence type="evidence at protein level"/>
<keyword id="KW-0963">Cytoplasm</keyword>
<keyword id="KW-0349">Heme</keyword>
<keyword id="KW-0408">Iron</keyword>
<keyword id="KW-0479">Metal-binding</keyword>
<keyword id="KW-0944">Nitration</keyword>
<keyword id="KW-0535">Nitrogen fixation</keyword>
<keyword id="KW-0539">Nucleus</keyword>
<keyword id="KW-0561">Oxygen transport</keyword>
<keyword id="KW-0597">Phosphoprotein</keyword>
<keyword id="KW-1185">Reference proteome</keyword>
<keyword id="KW-0813">Transport</keyword>
<sequence>MGFTEKQESLVNSSWESFKQNLSGYSVLFYTIILEKAPAAKGMFSFLKDTTGVQDSPQLQAHAAKVFEMVRDSAVQLRATGEVILGDATLGAIHIQKGVVDPHFVVVKEALLKTIKEAAGGNWSEELSTAWEVAYDGLAASIKKSMS</sequence>
<dbReference type="EMBL" id="CM001221">
    <property type="protein sequence ID" value="AES99407.1"/>
    <property type="molecule type" value="Genomic_DNA"/>
</dbReference>
<dbReference type="EMBL" id="PSQE01000005">
    <property type="protein sequence ID" value="RHN57001.1"/>
    <property type="molecule type" value="Genomic_DNA"/>
</dbReference>
<dbReference type="SMR" id="G7KGT0"/>
<dbReference type="STRING" id="3880.G7KGT0"/>
<dbReference type="PaxDb" id="3880-AES99407"/>
<dbReference type="EnsemblPlants" id="rna32483">
    <property type="protein sequence ID" value="RHN57001.1"/>
    <property type="gene ID" value="gene32483"/>
</dbReference>
<dbReference type="GeneID" id="11428958"/>
<dbReference type="Gramene" id="rna32483">
    <property type="protein sequence ID" value="RHN57001.1"/>
    <property type="gene ID" value="gene32483"/>
</dbReference>
<dbReference type="KEGG" id="mtr:11428958"/>
<dbReference type="eggNOG" id="KOG3378">
    <property type="taxonomic scope" value="Eukaryota"/>
</dbReference>
<dbReference type="HOGENOM" id="CLU_003827_11_2_1"/>
<dbReference type="OrthoDB" id="2012505at2759"/>
<dbReference type="Proteomes" id="UP000002051">
    <property type="component" value="Chromosome 5"/>
</dbReference>
<dbReference type="Proteomes" id="UP000265566">
    <property type="component" value="Chromosome 5"/>
</dbReference>
<dbReference type="GO" id="GO:0005737">
    <property type="term" value="C:cytoplasm"/>
    <property type="evidence" value="ECO:0000314"/>
    <property type="project" value="UniProtKB"/>
</dbReference>
<dbReference type="GO" id="GO:0005634">
    <property type="term" value="C:nucleus"/>
    <property type="evidence" value="ECO:0007669"/>
    <property type="project" value="UniProtKB-SubCell"/>
</dbReference>
<dbReference type="GO" id="GO:0020037">
    <property type="term" value="F:heme binding"/>
    <property type="evidence" value="ECO:0007669"/>
    <property type="project" value="InterPro"/>
</dbReference>
<dbReference type="GO" id="GO:0046872">
    <property type="term" value="F:metal ion binding"/>
    <property type="evidence" value="ECO:0007669"/>
    <property type="project" value="UniProtKB-KW"/>
</dbReference>
<dbReference type="GO" id="GO:0019825">
    <property type="term" value="F:oxygen binding"/>
    <property type="evidence" value="ECO:0007669"/>
    <property type="project" value="InterPro"/>
</dbReference>
<dbReference type="GO" id="GO:0005344">
    <property type="term" value="F:oxygen carrier activity"/>
    <property type="evidence" value="ECO:0007669"/>
    <property type="project" value="UniProtKB-KW"/>
</dbReference>
<dbReference type="CDD" id="cd08923">
    <property type="entry name" value="class1-2_nsHbs_Lbs"/>
    <property type="match status" value="1"/>
</dbReference>
<dbReference type="Gene3D" id="1.10.490.10">
    <property type="entry name" value="Globins"/>
    <property type="match status" value="1"/>
</dbReference>
<dbReference type="InterPro" id="IPR000971">
    <property type="entry name" value="Globin"/>
</dbReference>
<dbReference type="InterPro" id="IPR009050">
    <property type="entry name" value="Globin-like_sf"/>
</dbReference>
<dbReference type="InterPro" id="IPR012292">
    <property type="entry name" value="Globin/Proto"/>
</dbReference>
<dbReference type="InterPro" id="IPR001032">
    <property type="entry name" value="Leghaemoglobin-like"/>
</dbReference>
<dbReference type="InterPro" id="IPR019824">
    <property type="entry name" value="Leghaemoglobin_Fe_BS"/>
</dbReference>
<dbReference type="PANTHER" id="PTHR22924">
    <property type="entry name" value="LEGHEMOGLOBIN-RELATED"/>
    <property type="match status" value="1"/>
</dbReference>
<dbReference type="PANTHER" id="PTHR22924:SF92">
    <property type="entry name" value="NON-SYMBIOTIC HEMOGLOBIN 2"/>
    <property type="match status" value="1"/>
</dbReference>
<dbReference type="Pfam" id="PF00042">
    <property type="entry name" value="Globin"/>
    <property type="match status" value="1"/>
</dbReference>
<dbReference type="PRINTS" id="PR00188">
    <property type="entry name" value="PLANTGLOBIN"/>
</dbReference>
<dbReference type="SUPFAM" id="SSF46458">
    <property type="entry name" value="Globin-like"/>
    <property type="match status" value="1"/>
</dbReference>
<dbReference type="PROSITE" id="PS01033">
    <property type="entry name" value="GLOBIN"/>
    <property type="match status" value="1"/>
</dbReference>
<dbReference type="PROSITE" id="PS00208">
    <property type="entry name" value="PLANT_GLOBIN"/>
    <property type="match status" value="1"/>
</dbReference>
<comment type="function">
    <text evidence="5 8 9 12">Leghemoglobin that reversibly binds oxygen O(2) through a pentacoordinated heme iron (By similarity). In root nodules, facilitates the diffusion of oxygen to the bacteroids while preventing the bacterial nitrogenase from being inactivated by buffering dioxygen, nitric oxide and carbon monoxide, and promoting the formation of reactive oxygen species (ROS, e.g. H(2)O(2)) (PubMed:17540516, PubMed:29868087, PubMed:32442331). This role is essential for symbiotic nitrogen fixation (SNF) (PubMed:17540516, PubMed:29868087, PubMed:32442331).</text>
</comment>
<comment type="subunit">
    <text evidence="3 8">Monomer (By similarity). Interacts with CAS31 in the cytoplasm; this interaction leads to its protection from denaturation under thermal and drought stresses (PubMed:29868087).</text>
</comment>
<comment type="subcellular location">
    <subcellularLocation>
        <location evidence="8">Cytoplasm</location>
    </subcellularLocation>
    <subcellularLocation>
        <location evidence="3">Nucleus</location>
    </subcellularLocation>
</comment>
<comment type="tissue specificity">
    <text evidence="8">Root nodules.</text>
</comment>
<comment type="developmental stage">
    <text evidence="8">In root nodules, accumulates during maturation but gradually fades out during nodule senescence (PubMed:29868087). Highest levels observed in the nitrogen fixation zone (III), but also observed in infection zone (II) (PubMed:29868087).</text>
</comment>
<comment type="induction">
    <text evidence="7">Locally down-regulated by cadmium (Cd), thus leading to nodule inactivation and impaired biological nitrogen fixation (BNF).</text>
</comment>
<comment type="PTM">
    <text evidence="2">Nitrated in effective nodules and particularly in hypoxic conditions; this mechanism may play a protective role in the symbiosis by buffering toxic peroxynitrite NO(2)(-). Nitration level decrease during nodule senescence.</text>
</comment>
<comment type="PTM">
    <text evidence="4">Phosphorylation at Ser-45 disrupts the molecular environment of its porphyrin ring oxygen binding pocket, thus leading to a reduced oxygen consumption and to the delivery of oxygen O(2) to symbiosomes.</text>
</comment>
<comment type="disruption phenotype">
    <text evidence="8">Reduced nitrogenase activity in root nodules.</text>
</comment>
<comment type="similarity">
    <text evidence="13">Belongs to the plant globin family.</text>
</comment>
<protein>
    <recommendedName>
        <fullName evidence="12">Leghemoglobin 8</fullName>
        <shortName evidence="12">MtLb8</shortName>
    </recommendedName>
    <alternativeName>
        <fullName evidence="11">Leghemoglobin 6</fullName>
        <shortName evidence="11">MtLb6</shortName>
    </alternativeName>
    <alternativeName>
        <fullName evidence="10">Leghemoglobin Lb120-1</fullName>
        <shortName evidence="10">MtLb120-1</shortName>
    </alternativeName>
</protein>